<reference key="1">
    <citation type="submission" date="2003-02" db="EMBL/GenBank/DDBJ databases">
        <authorList>
            <person name="Malek J.A."/>
            <person name="Eremeeva M.E."/>
            <person name="Dasch G.A."/>
        </authorList>
    </citation>
    <scope>NUCLEOTIDE SEQUENCE [LARGE SCALE GENOMIC DNA]</scope>
    <source>
        <strain>ATCC VR-151 / 246</strain>
    </source>
</reference>
<reference key="2">
    <citation type="journal article" date="1997" name="Int. J. Syst. Bacteriol.">
        <title>Citrate synthase gene comparison, a new tool for phylogenetic analysis, and its application for the rickettsiae.</title>
        <authorList>
            <person name="Roux V."/>
            <person name="Rydkina E."/>
            <person name="Eremeeva M."/>
            <person name="Raoult D."/>
        </authorList>
    </citation>
    <scope>NUCLEOTIDE SEQUENCE [GENOMIC DNA] OF 8-418</scope>
    <source>
        <strain>ATCC VR-151 / 246</strain>
    </source>
</reference>
<name>CISY_RICS2</name>
<feature type="chain" id="PRO_0000169969" description="Citrate synthase">
    <location>
        <begin position="1"/>
        <end position="435"/>
    </location>
</feature>
<feature type="active site" evidence="1">
    <location>
        <position position="311"/>
    </location>
</feature>
<feature type="active site" evidence="1">
    <location>
        <position position="370"/>
    </location>
</feature>
<organism>
    <name type="scientific">Rickettsia sibirica (strain ATCC VR-151 / 246)</name>
    <dbReference type="NCBI Taxonomy" id="272951"/>
    <lineage>
        <taxon>Bacteria</taxon>
        <taxon>Pseudomonadati</taxon>
        <taxon>Pseudomonadota</taxon>
        <taxon>Alphaproteobacteria</taxon>
        <taxon>Rickettsiales</taxon>
        <taxon>Rickettsiaceae</taxon>
        <taxon>Rickettsieae</taxon>
        <taxon>Rickettsia</taxon>
        <taxon>spotted fever group</taxon>
        <taxon>Rickettsia sibirica subgroup</taxon>
    </lineage>
</organism>
<accession>Q59778</accession>
<accession>Q7PA47</accession>
<comment type="catalytic activity">
    <reaction evidence="1">
        <text>oxaloacetate + acetyl-CoA + H2O = citrate + CoA + H(+)</text>
        <dbReference type="Rhea" id="RHEA:16845"/>
        <dbReference type="ChEBI" id="CHEBI:15377"/>
        <dbReference type="ChEBI" id="CHEBI:15378"/>
        <dbReference type="ChEBI" id="CHEBI:16452"/>
        <dbReference type="ChEBI" id="CHEBI:16947"/>
        <dbReference type="ChEBI" id="CHEBI:57287"/>
        <dbReference type="ChEBI" id="CHEBI:57288"/>
        <dbReference type="EC" id="2.3.3.16"/>
    </reaction>
</comment>
<comment type="pathway">
    <text>Carbohydrate metabolism; tricarboxylic acid cycle; isocitrate from oxaloacetate: step 1/2.</text>
</comment>
<comment type="miscellaneous">
    <text>Citrate synthase is found in nearly all cells capable of oxidative metabolism.</text>
</comment>
<comment type="similarity">
    <text evidence="2">Belongs to the citrate synthase family.</text>
</comment>
<gene>
    <name type="primary">gltA</name>
    <name evidence="3" type="ORF">rsib_orf788</name>
</gene>
<keyword id="KW-0808">Transferase</keyword>
<keyword id="KW-0816">Tricarboxylic acid cycle</keyword>
<protein>
    <recommendedName>
        <fullName>Citrate synthase</fullName>
        <ecNumber>2.3.3.16</ecNumber>
    </recommendedName>
</protein>
<evidence type="ECO:0000255" key="1">
    <source>
        <dbReference type="PROSITE-ProRule" id="PRU10117"/>
    </source>
</evidence>
<evidence type="ECO:0000305" key="2"/>
<evidence type="ECO:0000312" key="3">
    <source>
        <dbReference type="EMBL" id="EAA25990.1"/>
    </source>
</evidence>
<dbReference type="EC" id="2.3.3.16"/>
<dbReference type="EMBL" id="AABW01000001">
    <property type="protein sequence ID" value="EAA25990.1"/>
    <property type="molecule type" value="Genomic_DNA"/>
</dbReference>
<dbReference type="EMBL" id="U59734">
    <property type="protein sequence ID" value="AAB02971.1"/>
    <property type="molecule type" value="Genomic_DNA"/>
</dbReference>
<dbReference type="RefSeq" id="WP_004997172.1">
    <property type="nucleotide sequence ID" value="NZ_AABW01000001.1"/>
</dbReference>
<dbReference type="SMR" id="Q59778"/>
<dbReference type="GeneID" id="95361701"/>
<dbReference type="eggNOG" id="COG0372">
    <property type="taxonomic scope" value="Bacteria"/>
</dbReference>
<dbReference type="HOGENOM" id="CLU_025068_0_0_5"/>
<dbReference type="UniPathway" id="UPA00223">
    <property type="reaction ID" value="UER00717"/>
</dbReference>
<dbReference type="Proteomes" id="UP000004455">
    <property type="component" value="Unassembled WGS sequence"/>
</dbReference>
<dbReference type="GO" id="GO:0005737">
    <property type="term" value="C:cytoplasm"/>
    <property type="evidence" value="ECO:0007669"/>
    <property type="project" value="InterPro"/>
</dbReference>
<dbReference type="GO" id="GO:0004108">
    <property type="term" value="F:citrate (Si)-synthase activity"/>
    <property type="evidence" value="ECO:0007669"/>
    <property type="project" value="InterPro"/>
</dbReference>
<dbReference type="GO" id="GO:0006099">
    <property type="term" value="P:tricarboxylic acid cycle"/>
    <property type="evidence" value="ECO:0007669"/>
    <property type="project" value="UniProtKB-UniPathway"/>
</dbReference>
<dbReference type="CDD" id="cd06114">
    <property type="entry name" value="EcCS_like"/>
    <property type="match status" value="1"/>
</dbReference>
<dbReference type="FunFam" id="1.10.230.10:FF:000002">
    <property type="entry name" value="Citrate synthase"/>
    <property type="match status" value="1"/>
</dbReference>
<dbReference type="Gene3D" id="2.20.28.60">
    <property type="match status" value="1"/>
</dbReference>
<dbReference type="Gene3D" id="1.10.580.10">
    <property type="entry name" value="Citrate Synthase, domain 1"/>
    <property type="match status" value="1"/>
</dbReference>
<dbReference type="Gene3D" id="1.10.230.10">
    <property type="entry name" value="Cytochrome P450-Terp, domain 2"/>
    <property type="match status" value="1"/>
</dbReference>
<dbReference type="InterPro" id="IPR016142">
    <property type="entry name" value="Citrate_synth-like_lrg_a-sub"/>
</dbReference>
<dbReference type="InterPro" id="IPR016143">
    <property type="entry name" value="Citrate_synth-like_sm_a-sub"/>
</dbReference>
<dbReference type="InterPro" id="IPR002020">
    <property type="entry name" value="Citrate_synthase"/>
</dbReference>
<dbReference type="InterPro" id="IPR019810">
    <property type="entry name" value="Citrate_synthase_AS"/>
</dbReference>
<dbReference type="InterPro" id="IPR024176">
    <property type="entry name" value="Citrate_synthase_bac-typ"/>
</dbReference>
<dbReference type="InterPro" id="IPR036969">
    <property type="entry name" value="Citrate_synthase_sf"/>
</dbReference>
<dbReference type="InterPro" id="IPR010953">
    <property type="entry name" value="Citrate_synthase_typ-I"/>
</dbReference>
<dbReference type="NCBIfam" id="TIGR01798">
    <property type="entry name" value="cit_synth_I"/>
    <property type="match status" value="1"/>
</dbReference>
<dbReference type="NCBIfam" id="NF004126">
    <property type="entry name" value="PRK05614.1"/>
    <property type="match status" value="1"/>
</dbReference>
<dbReference type="PANTHER" id="PTHR42871">
    <property type="entry name" value="CITRATE SYNTHASE"/>
    <property type="match status" value="1"/>
</dbReference>
<dbReference type="PANTHER" id="PTHR42871:SF1">
    <property type="entry name" value="CITRATE SYNTHASE"/>
    <property type="match status" value="1"/>
</dbReference>
<dbReference type="Pfam" id="PF00285">
    <property type="entry name" value="Citrate_synt"/>
    <property type="match status" value="1"/>
</dbReference>
<dbReference type="PIRSF" id="PIRSF001369">
    <property type="entry name" value="Citrate_synth"/>
    <property type="match status" value="1"/>
</dbReference>
<dbReference type="PRINTS" id="PR00143">
    <property type="entry name" value="CITRTSNTHASE"/>
</dbReference>
<dbReference type="SUPFAM" id="SSF48256">
    <property type="entry name" value="Citrate synthase"/>
    <property type="match status" value="1"/>
</dbReference>
<dbReference type="PROSITE" id="PS00480">
    <property type="entry name" value="CITRATE_SYNTHASE"/>
    <property type="match status" value="1"/>
</dbReference>
<proteinExistence type="inferred from homology"/>
<sequence length="435" mass="49176">MTNENNNDSEFAELKIRGKIFKLPILKASIGEDVIDISRVSAEADCFTYDPGFMSTASCQSTITYIDGDKGILRHRGYDIKDLAEKSDFLEVAYLLIYGELPSGEQYNNFTKQVAHHSLVNERLHYLFQTFCSSSHPMAIMLAAVGSLSAFYPDLLNFKEADYELTAIRMIAKIPTIAAMSYKYSIGQPFIYPDNSLDFTENFLHMMFATPCTKYTVNPIIKNALNKIFILHADHEQNASTSTVRIAGSSGANPFACISTGIASLWGPAHGGANEAVINMLKEIGSSEYIPKYIAKAKDKNDPFRLMGFGHRVYKNYDPRAAVLKETCKEVLKELGQLDNNPLLQIAIELEAIALKDEYFIERKLYPNVDFYSGIIYKAMGIPSQMFTVLFAIARTVGWMAQWKEMHEDPEQKISRPRQLYTGYVHREYKGIRER</sequence>